<name>FGFH_NPVOP</name>
<feature type="signal peptide" evidence="1">
    <location>
        <begin position="1"/>
        <end position="17"/>
    </location>
</feature>
<feature type="chain" id="PRO_0000009002" description="Fibroblast growth factor homolog">
    <location>
        <begin position="18"/>
        <end position="205"/>
    </location>
</feature>
<keyword id="KW-0339">Growth factor</keyword>
<keyword id="KW-1185">Reference proteome</keyword>
<keyword id="KW-0732">Signal</keyword>
<gene>
    <name type="primary">FGF</name>
    <name type="ORF">ORF27</name>
</gene>
<accession>O10284</accession>
<evidence type="ECO:0000255" key="1"/>
<evidence type="ECO:0000305" key="2"/>
<organism>
    <name type="scientific">Orgyia pseudotsugata multicapsid polyhedrosis virus</name>
    <name type="common">OpMNPV</name>
    <dbReference type="NCBI Taxonomy" id="262177"/>
    <lineage>
        <taxon>Viruses</taxon>
        <taxon>Viruses incertae sedis</taxon>
        <taxon>Naldaviricetes</taxon>
        <taxon>Lefavirales</taxon>
        <taxon>Baculoviridae</taxon>
        <taxon>Alphabaculovirus</taxon>
        <taxon>Alphabaculovirus orpseudotsugatae</taxon>
    </lineage>
</organism>
<organismHost>
    <name type="scientific">Orgyia pseudotsugata</name>
    <name type="common">Douglas-fir tussock moth</name>
    <dbReference type="NCBI Taxonomy" id="33414"/>
</organismHost>
<sequence length="205" mass="23092">MHRLALVVATVAYLCAGHAPLQHITGTQRLVQVLIHNRYLAVRSDGTVGGTTYASSLDTVLQRIAIAHGRILLRNAVSCMYVCLDRCGAMYASAALSSDCILNEVMLENNYDVMFKIYNGKKTYVALDNTGNPRRVQLPRQRPLRMMNVYTFIMRIPLNYISVSQCAKPNKVIRHRKLPLVVQTTLNTISIYIITHVTMLFDHVD</sequence>
<reference key="1">
    <citation type="journal article" date="1997" name="Virology">
        <title>The sequence of the Orgyia pseudotsugata multinucleocapsid nuclear polyhedrosis virus genome.</title>
        <authorList>
            <person name="Ahrens C.H."/>
            <person name="Russell R.R."/>
            <person name="Funk C.J."/>
            <person name="Evans J."/>
            <person name="Harwood S."/>
            <person name="Rohrmann G.F."/>
        </authorList>
    </citation>
    <scope>NUCLEOTIDE SEQUENCE [LARGE SCALE GENOMIC DNA]</scope>
</reference>
<proteinExistence type="inferred from homology"/>
<protein>
    <recommendedName>
        <fullName>Fibroblast growth factor homolog</fullName>
    </recommendedName>
</protein>
<comment type="similarity">
    <text evidence="2">Belongs to the heparin-binding growth factors family.</text>
</comment>
<dbReference type="EMBL" id="U75930">
    <property type="protein sequence ID" value="AAC59026.1"/>
    <property type="molecule type" value="Genomic_DNA"/>
</dbReference>
<dbReference type="RefSeq" id="NP_046183.1">
    <property type="nucleotide sequence ID" value="NC_001875.2"/>
</dbReference>
<dbReference type="SMR" id="O10284"/>
<dbReference type="KEGG" id="vg:911990"/>
<dbReference type="OrthoDB" id="14030at10239"/>
<dbReference type="Proteomes" id="UP000009248">
    <property type="component" value="Genome"/>
</dbReference>
<dbReference type="GO" id="GO:0008083">
    <property type="term" value="F:growth factor activity"/>
    <property type="evidence" value="ECO:0007669"/>
    <property type="project" value="UniProtKB-KW"/>
</dbReference>
<dbReference type="CDD" id="cd23311">
    <property type="entry name" value="beta-trefoil_FGF_Bnl-like"/>
    <property type="match status" value="1"/>
</dbReference>
<dbReference type="Gene3D" id="2.80.10.50">
    <property type="match status" value="1"/>
</dbReference>
<dbReference type="InterPro" id="IPR002209">
    <property type="entry name" value="Fibroblast_GF_fam"/>
</dbReference>
<dbReference type="InterPro" id="IPR008996">
    <property type="entry name" value="IL1/FGF"/>
</dbReference>
<dbReference type="PANTHER" id="PTHR11486">
    <property type="entry name" value="FIBROBLAST GROWTH FACTOR"/>
    <property type="match status" value="1"/>
</dbReference>
<dbReference type="Pfam" id="PF00167">
    <property type="entry name" value="FGF"/>
    <property type="match status" value="1"/>
</dbReference>
<dbReference type="SMART" id="SM00442">
    <property type="entry name" value="FGF"/>
    <property type="match status" value="1"/>
</dbReference>
<dbReference type="SUPFAM" id="SSF50353">
    <property type="entry name" value="Cytokine"/>
    <property type="match status" value="1"/>
</dbReference>
<dbReference type="PROSITE" id="PS00247">
    <property type="entry name" value="HBGF_FGF"/>
    <property type="match status" value="1"/>
</dbReference>